<keyword id="KW-0963">Cytoplasm</keyword>
<keyword id="KW-0251">Elongation factor</keyword>
<keyword id="KW-0648">Protein biosynthesis</keyword>
<keyword id="KW-1185">Reference proteome</keyword>
<dbReference type="EMBL" id="CP001079">
    <property type="protein sequence ID" value="ACM49431.1"/>
    <property type="molecule type" value="Genomic_DNA"/>
</dbReference>
<dbReference type="RefSeq" id="WP_010267861.1">
    <property type="nucleotide sequence ID" value="NZ_AFMS01000102.1"/>
</dbReference>
<dbReference type="SMR" id="B9KIW9"/>
<dbReference type="STRING" id="320483.AMF_586"/>
<dbReference type="GeneID" id="7398029"/>
<dbReference type="KEGG" id="amf:AMF_586"/>
<dbReference type="PATRIC" id="fig|320483.3.peg.679"/>
<dbReference type="eggNOG" id="COG0264">
    <property type="taxonomic scope" value="Bacteria"/>
</dbReference>
<dbReference type="HOGENOM" id="CLU_047155_0_2_5"/>
<dbReference type="Proteomes" id="UP000007307">
    <property type="component" value="Chromosome"/>
</dbReference>
<dbReference type="GO" id="GO:0005737">
    <property type="term" value="C:cytoplasm"/>
    <property type="evidence" value="ECO:0007669"/>
    <property type="project" value="UniProtKB-SubCell"/>
</dbReference>
<dbReference type="GO" id="GO:0003746">
    <property type="term" value="F:translation elongation factor activity"/>
    <property type="evidence" value="ECO:0007669"/>
    <property type="project" value="UniProtKB-UniRule"/>
</dbReference>
<dbReference type="CDD" id="cd14275">
    <property type="entry name" value="UBA_EF-Ts"/>
    <property type="match status" value="1"/>
</dbReference>
<dbReference type="FunFam" id="1.10.286.20:FF:000001">
    <property type="entry name" value="Elongation factor Ts"/>
    <property type="match status" value="1"/>
</dbReference>
<dbReference type="FunFam" id="1.10.8.10:FF:000001">
    <property type="entry name" value="Elongation factor Ts"/>
    <property type="match status" value="1"/>
</dbReference>
<dbReference type="Gene3D" id="1.10.286.20">
    <property type="match status" value="1"/>
</dbReference>
<dbReference type="Gene3D" id="1.10.8.10">
    <property type="entry name" value="DNA helicase RuvA subunit, C-terminal domain"/>
    <property type="match status" value="1"/>
</dbReference>
<dbReference type="Gene3D" id="3.30.479.20">
    <property type="entry name" value="Elongation factor Ts, dimerisation domain"/>
    <property type="match status" value="2"/>
</dbReference>
<dbReference type="HAMAP" id="MF_00050">
    <property type="entry name" value="EF_Ts"/>
    <property type="match status" value="1"/>
</dbReference>
<dbReference type="InterPro" id="IPR036402">
    <property type="entry name" value="EF-Ts_dimer_sf"/>
</dbReference>
<dbReference type="InterPro" id="IPR001816">
    <property type="entry name" value="Transl_elong_EFTs/EF1B"/>
</dbReference>
<dbReference type="InterPro" id="IPR014039">
    <property type="entry name" value="Transl_elong_EFTs/EF1B_dimer"/>
</dbReference>
<dbReference type="InterPro" id="IPR018101">
    <property type="entry name" value="Transl_elong_Ts_CS"/>
</dbReference>
<dbReference type="InterPro" id="IPR009060">
    <property type="entry name" value="UBA-like_sf"/>
</dbReference>
<dbReference type="NCBIfam" id="TIGR00116">
    <property type="entry name" value="tsf"/>
    <property type="match status" value="1"/>
</dbReference>
<dbReference type="PANTHER" id="PTHR11741">
    <property type="entry name" value="ELONGATION FACTOR TS"/>
    <property type="match status" value="1"/>
</dbReference>
<dbReference type="PANTHER" id="PTHR11741:SF0">
    <property type="entry name" value="ELONGATION FACTOR TS, MITOCHONDRIAL"/>
    <property type="match status" value="1"/>
</dbReference>
<dbReference type="Pfam" id="PF00889">
    <property type="entry name" value="EF_TS"/>
    <property type="match status" value="1"/>
</dbReference>
<dbReference type="SUPFAM" id="SSF54713">
    <property type="entry name" value="Elongation factor Ts (EF-Ts), dimerisation domain"/>
    <property type="match status" value="2"/>
</dbReference>
<dbReference type="SUPFAM" id="SSF46934">
    <property type="entry name" value="UBA-like"/>
    <property type="match status" value="1"/>
</dbReference>
<dbReference type="PROSITE" id="PS01126">
    <property type="entry name" value="EF_TS_1"/>
    <property type="match status" value="1"/>
</dbReference>
<feature type="chain" id="PRO_1000117555" description="Elongation factor Ts">
    <location>
        <begin position="1"/>
        <end position="291"/>
    </location>
</feature>
<feature type="region of interest" description="Involved in Mg(2+) ion dislocation from EF-Tu" evidence="1">
    <location>
        <begin position="79"/>
        <end position="82"/>
    </location>
</feature>
<comment type="function">
    <text evidence="1">Associates with the EF-Tu.GDP complex and induces the exchange of GDP to GTP. It remains bound to the aminoacyl-tRNA.EF-Tu.GTP complex up to the GTP hydrolysis stage on the ribosome.</text>
</comment>
<comment type="subcellular location">
    <subcellularLocation>
        <location evidence="1">Cytoplasm</location>
    </subcellularLocation>
</comment>
<comment type="similarity">
    <text evidence="1">Belongs to the EF-Ts family.</text>
</comment>
<organism>
    <name type="scientific">Anaplasma marginale (strain Florida)</name>
    <dbReference type="NCBI Taxonomy" id="320483"/>
    <lineage>
        <taxon>Bacteria</taxon>
        <taxon>Pseudomonadati</taxon>
        <taxon>Pseudomonadota</taxon>
        <taxon>Alphaproteobacteria</taxon>
        <taxon>Rickettsiales</taxon>
        <taxon>Anaplasmataceae</taxon>
        <taxon>Anaplasma</taxon>
    </lineage>
</organism>
<gene>
    <name evidence="1" type="primary">tsf</name>
    <name type="ordered locus">AMF_586</name>
</gene>
<accession>B9KIW9</accession>
<evidence type="ECO:0000255" key="1">
    <source>
        <dbReference type="HAMAP-Rule" id="MF_00050"/>
    </source>
</evidence>
<reference key="1">
    <citation type="journal article" date="2009" name="BMC Genomics">
        <title>Conservation in the face of diversity: multistrain analysis of an intracellular bacterium.</title>
        <authorList>
            <person name="Dark M.J."/>
            <person name="Herndon D.R."/>
            <person name="Kappmeyer L.S."/>
            <person name="Gonzales M.P."/>
            <person name="Nordeen E."/>
            <person name="Palmer G.H."/>
            <person name="Knowles D.P. Jr."/>
            <person name="Brayton K.A."/>
        </authorList>
    </citation>
    <scope>NUCLEOTIDE SEQUENCE [LARGE SCALE GENOMIC DNA]</scope>
    <source>
        <strain>Florida</strain>
    </source>
</reference>
<protein>
    <recommendedName>
        <fullName evidence="1">Elongation factor Ts</fullName>
        <shortName evidence="1">EF-Ts</shortName>
    </recommendedName>
</protein>
<proteinExistence type="inferred from homology"/>
<sequence length="291" mass="30903">MKVGVEAIRELRQITGAGLGDCKEALETCSGDMEKAKVYLREKGLSKAYKKSHRDAADGLVAVRVEGDKGAILKLGSETDFVARNEKFRSLAAELVSSLLKHGAEDLSSFSASPYDGGSGVSVADEVVNAAAVLGEHIVLSGIGFLELGGPGVIGSYIHGAVGEGIGRAGALVALEATTAKTEALLEFARQLAMHIVAAKPESVSVETLSNDIVEREREIVAKQVEALGKPESVASKIVDGRMQKFFEDMVLLEQTFIMDGSTKIRDLLHNKGQDLGCEVRIVAYRLFSVG</sequence>
<name>EFTS_ANAMF</name>